<evidence type="ECO:0000255" key="1">
    <source>
        <dbReference type="HAMAP-Rule" id="MF_01148"/>
    </source>
</evidence>
<accession>B5ZMX7</accession>
<keyword id="KW-0012">Acyltransferase</keyword>
<keyword id="KW-0997">Cell inner membrane</keyword>
<keyword id="KW-1003">Cell membrane</keyword>
<keyword id="KW-0472">Membrane</keyword>
<keyword id="KW-1185">Reference proteome</keyword>
<keyword id="KW-0808">Transferase</keyword>
<keyword id="KW-0812">Transmembrane</keyword>
<keyword id="KW-1133">Transmembrane helix</keyword>
<protein>
    <recommendedName>
        <fullName evidence="1">Apolipoprotein N-acyltransferase</fullName>
        <shortName evidence="1">ALP N-acyltransferase</shortName>
        <ecNumber evidence="1">2.3.1.269</ecNumber>
    </recommendedName>
</protein>
<gene>
    <name evidence="1" type="primary">lnt</name>
    <name type="ordered locus">Rleg2_0015</name>
</gene>
<comment type="function">
    <text evidence="1">Catalyzes the phospholipid dependent N-acylation of the N-terminal cysteine of apolipoprotein, the last step in lipoprotein maturation.</text>
</comment>
<comment type="catalytic activity">
    <reaction evidence="1">
        <text>N-terminal S-1,2-diacyl-sn-glyceryl-L-cysteinyl-[lipoprotein] + a glycerophospholipid = N-acyl-S-1,2-diacyl-sn-glyceryl-L-cysteinyl-[lipoprotein] + a 2-acyl-sn-glycero-3-phospholipid + H(+)</text>
        <dbReference type="Rhea" id="RHEA:48228"/>
        <dbReference type="Rhea" id="RHEA-COMP:14681"/>
        <dbReference type="Rhea" id="RHEA-COMP:14684"/>
        <dbReference type="ChEBI" id="CHEBI:15378"/>
        <dbReference type="ChEBI" id="CHEBI:136912"/>
        <dbReference type="ChEBI" id="CHEBI:140656"/>
        <dbReference type="ChEBI" id="CHEBI:140657"/>
        <dbReference type="ChEBI" id="CHEBI:140660"/>
        <dbReference type="EC" id="2.3.1.269"/>
    </reaction>
</comment>
<comment type="pathway">
    <text evidence="1">Protein modification; lipoprotein biosynthesis (N-acyl transfer).</text>
</comment>
<comment type="subcellular location">
    <subcellularLocation>
        <location evidence="1">Cell inner membrane</location>
        <topology evidence="1">Multi-pass membrane protein</topology>
    </subcellularLocation>
</comment>
<comment type="similarity">
    <text evidence="1">Belongs to the CN hydrolase family. Apolipoprotein N-acyltransferase subfamily.</text>
</comment>
<name>LNT_RHILW</name>
<dbReference type="EC" id="2.3.1.269" evidence="1"/>
<dbReference type="EMBL" id="CP001191">
    <property type="protein sequence ID" value="ACI53318.1"/>
    <property type="molecule type" value="Genomic_DNA"/>
</dbReference>
<dbReference type="RefSeq" id="WP_012556372.1">
    <property type="nucleotide sequence ID" value="NC_011369.1"/>
</dbReference>
<dbReference type="SMR" id="B5ZMX7"/>
<dbReference type="STRING" id="395492.Rleg2_0015"/>
<dbReference type="KEGG" id="rlt:Rleg2_0015"/>
<dbReference type="eggNOG" id="COG0815">
    <property type="taxonomic scope" value="Bacteria"/>
</dbReference>
<dbReference type="HOGENOM" id="CLU_019563_3_1_5"/>
<dbReference type="UniPathway" id="UPA00666"/>
<dbReference type="Proteomes" id="UP000008330">
    <property type="component" value="Chromosome"/>
</dbReference>
<dbReference type="GO" id="GO:0005886">
    <property type="term" value="C:plasma membrane"/>
    <property type="evidence" value="ECO:0007669"/>
    <property type="project" value="UniProtKB-SubCell"/>
</dbReference>
<dbReference type="GO" id="GO:0016410">
    <property type="term" value="F:N-acyltransferase activity"/>
    <property type="evidence" value="ECO:0007669"/>
    <property type="project" value="UniProtKB-UniRule"/>
</dbReference>
<dbReference type="GO" id="GO:0042158">
    <property type="term" value="P:lipoprotein biosynthetic process"/>
    <property type="evidence" value="ECO:0007669"/>
    <property type="project" value="UniProtKB-UniRule"/>
</dbReference>
<dbReference type="CDD" id="cd07571">
    <property type="entry name" value="ALP_N-acyl_transferase"/>
    <property type="match status" value="1"/>
</dbReference>
<dbReference type="Gene3D" id="3.60.110.10">
    <property type="entry name" value="Carbon-nitrogen hydrolase"/>
    <property type="match status" value="1"/>
</dbReference>
<dbReference type="HAMAP" id="MF_01148">
    <property type="entry name" value="Lnt"/>
    <property type="match status" value="1"/>
</dbReference>
<dbReference type="InterPro" id="IPR004563">
    <property type="entry name" value="Apolipo_AcylTrfase"/>
</dbReference>
<dbReference type="InterPro" id="IPR003010">
    <property type="entry name" value="C-N_Hydrolase"/>
</dbReference>
<dbReference type="InterPro" id="IPR036526">
    <property type="entry name" value="C-N_Hydrolase_sf"/>
</dbReference>
<dbReference type="InterPro" id="IPR045378">
    <property type="entry name" value="LNT_N"/>
</dbReference>
<dbReference type="NCBIfam" id="TIGR00546">
    <property type="entry name" value="lnt"/>
    <property type="match status" value="1"/>
</dbReference>
<dbReference type="PANTHER" id="PTHR38686">
    <property type="entry name" value="APOLIPOPROTEIN N-ACYLTRANSFERASE"/>
    <property type="match status" value="1"/>
</dbReference>
<dbReference type="PANTHER" id="PTHR38686:SF1">
    <property type="entry name" value="APOLIPOPROTEIN N-ACYLTRANSFERASE"/>
    <property type="match status" value="1"/>
</dbReference>
<dbReference type="Pfam" id="PF00795">
    <property type="entry name" value="CN_hydrolase"/>
    <property type="match status" value="1"/>
</dbReference>
<dbReference type="Pfam" id="PF20154">
    <property type="entry name" value="LNT_N"/>
    <property type="match status" value="1"/>
</dbReference>
<dbReference type="SUPFAM" id="SSF56317">
    <property type="entry name" value="Carbon-nitrogen hydrolase"/>
    <property type="match status" value="1"/>
</dbReference>
<dbReference type="PROSITE" id="PS50263">
    <property type="entry name" value="CN_HYDROLASE"/>
    <property type="match status" value="1"/>
</dbReference>
<proteinExistence type="inferred from homology"/>
<feature type="chain" id="PRO_1000137482" description="Apolipoprotein N-acyltransferase">
    <location>
        <begin position="1"/>
        <end position="534"/>
    </location>
</feature>
<feature type="transmembrane region" description="Helical" evidence="1">
    <location>
        <begin position="18"/>
        <end position="38"/>
    </location>
</feature>
<feature type="transmembrane region" description="Helical" evidence="1">
    <location>
        <begin position="39"/>
        <end position="59"/>
    </location>
</feature>
<feature type="transmembrane region" description="Helical" evidence="1">
    <location>
        <begin position="74"/>
        <end position="94"/>
    </location>
</feature>
<feature type="transmembrane region" description="Helical" evidence="1">
    <location>
        <begin position="105"/>
        <end position="125"/>
    </location>
</feature>
<feature type="transmembrane region" description="Helical" evidence="1">
    <location>
        <begin position="127"/>
        <end position="147"/>
    </location>
</feature>
<feature type="transmembrane region" description="Helical" evidence="1">
    <location>
        <begin position="178"/>
        <end position="198"/>
    </location>
</feature>
<feature type="transmembrane region" description="Helical" evidence="1">
    <location>
        <begin position="209"/>
        <end position="229"/>
    </location>
</feature>
<feature type="transmembrane region" description="Helical" evidence="1">
    <location>
        <begin position="504"/>
        <end position="524"/>
    </location>
</feature>
<feature type="domain" description="CN hydrolase" evidence="1">
    <location>
        <begin position="246"/>
        <end position="496"/>
    </location>
</feature>
<feature type="active site" description="Proton acceptor" evidence="1">
    <location>
        <position position="291"/>
    </location>
</feature>
<feature type="active site" evidence="1">
    <location>
        <position position="355"/>
    </location>
</feature>
<feature type="active site" description="Nucleophile" evidence="1">
    <location>
        <position position="408"/>
    </location>
</feature>
<organism>
    <name type="scientific">Rhizobium leguminosarum bv. trifolii (strain WSM2304)</name>
    <dbReference type="NCBI Taxonomy" id="395492"/>
    <lineage>
        <taxon>Bacteria</taxon>
        <taxon>Pseudomonadati</taxon>
        <taxon>Pseudomonadota</taxon>
        <taxon>Alphaproteobacteria</taxon>
        <taxon>Hyphomicrobiales</taxon>
        <taxon>Rhizobiaceae</taxon>
        <taxon>Rhizobium/Agrobacterium group</taxon>
        <taxon>Rhizobium</taxon>
    </lineage>
</organism>
<reference key="1">
    <citation type="journal article" date="2010" name="Stand. Genomic Sci.">
        <title>Complete genome sequence of Rhizobium leguminosarum bv trifolii strain WSM2304, an effective microsymbiont of the South American clover Trifolium polymorphum.</title>
        <authorList>
            <person name="Reeve W."/>
            <person name="O'Hara G."/>
            <person name="Chain P."/>
            <person name="Ardley J."/>
            <person name="Brau L."/>
            <person name="Nandesena K."/>
            <person name="Tiwari R."/>
            <person name="Malfatti S."/>
            <person name="Kiss H."/>
            <person name="Lapidus A."/>
            <person name="Copeland A."/>
            <person name="Nolan M."/>
            <person name="Land M."/>
            <person name="Ivanova N."/>
            <person name="Mavromatis K."/>
            <person name="Markowitz V."/>
            <person name="Kyrpides N."/>
            <person name="Melino V."/>
            <person name="Denton M."/>
            <person name="Yates R."/>
            <person name="Howieson J."/>
        </authorList>
    </citation>
    <scope>NUCLEOTIDE SEQUENCE [LARGE SCALE GENOMIC DNA]</scope>
    <source>
        <strain>WSM2304</strain>
    </source>
</reference>
<sequence length="534" mass="57696">MERLADRVILVWGFKRSLLAIAAGAFAVLALPPFGFFAAMFLSFTLLVWLIDGAAASPDSGLVGRLWPAFATGWLFGFGYFVAGLWWLGHALLVDQDEFAWALPLAILGLPACLAIFYGLAVALARIFWSDGMGRIAALAAGFGLMEWLRSVVLTGFPWNAIGYGMMPVPLMMQSAHVIGAMGVTALAVFVFSAPALAGTRQGARNGTALAVLLFAAHLGYGAYALYVAPRAEALPEDKRPVVRLVQPDIDQAAKMDNDADRNAIFETHLKLSAETPKNGGRKPDIIVWPETAIPFILTDNQDALTRIADTLDDNQILIAGAVRAEEMGPGTPTRYYNSIYVIDGRGQIIAASDKVHLVPFGEYLPFEDLLTEFGIQNVVEMPGGFSAAVSRHLLALPGGLNLYPLICYEIIFPDEMTSDIEDANAILNITNDAWFGATPGPYQHFQQARVRAVETGLPLIRDANSGISAIVNAQGEIIAGLDLEQTGFIDATVDRFGLEAGTTFPRQTYFWLTEALLILIALVSRRGFISGLN</sequence>